<name>RL9_CALS4</name>
<sequence length="147" mass="16253">MKVILVKDVKNVGKAGEVVNVSDGYGRNYLIPKGLAIEATESNLKMLNEKKKAEERKRQQELEQAKELAQKLSKVGVTLKVKAGENGKLFGSVTSKDVEEALKEKGFEIDKKKIVLPENIKTTGTYYAEIKLYQGVTAKVQVDVVAE</sequence>
<reference key="1">
    <citation type="journal article" date="2002" name="Genome Res.">
        <title>A complete sequence of the T. tengcongensis genome.</title>
        <authorList>
            <person name="Bao Q."/>
            <person name="Tian Y."/>
            <person name="Li W."/>
            <person name="Xu Z."/>
            <person name="Xuan Z."/>
            <person name="Hu S."/>
            <person name="Dong W."/>
            <person name="Yang J."/>
            <person name="Chen Y."/>
            <person name="Xue Y."/>
            <person name="Xu Y."/>
            <person name="Lai X."/>
            <person name="Huang L."/>
            <person name="Dong X."/>
            <person name="Ma Y."/>
            <person name="Ling L."/>
            <person name="Tan H."/>
            <person name="Chen R."/>
            <person name="Wang J."/>
            <person name="Yu J."/>
            <person name="Yang H."/>
        </authorList>
    </citation>
    <scope>NUCLEOTIDE SEQUENCE [LARGE SCALE GENOMIC DNA]</scope>
    <source>
        <strain>DSM 15242 / JCM 11007 / NBRC 100824 / MB4</strain>
    </source>
</reference>
<protein>
    <recommendedName>
        <fullName evidence="1">Large ribosomal subunit protein bL9</fullName>
    </recommendedName>
    <alternativeName>
        <fullName evidence="2">50S ribosomal protein L9</fullName>
    </alternativeName>
</protein>
<proteinExistence type="inferred from homology"/>
<feature type="chain" id="PRO_0000176698" description="Large ribosomal subunit protein bL9">
    <location>
        <begin position="1"/>
        <end position="147"/>
    </location>
</feature>
<keyword id="KW-1185">Reference proteome</keyword>
<keyword id="KW-0687">Ribonucleoprotein</keyword>
<keyword id="KW-0689">Ribosomal protein</keyword>
<keyword id="KW-0694">RNA-binding</keyword>
<keyword id="KW-0699">rRNA-binding</keyword>
<dbReference type="EMBL" id="AE008691">
    <property type="protein sequence ID" value="AAM25879.1"/>
    <property type="molecule type" value="Genomic_DNA"/>
</dbReference>
<dbReference type="RefSeq" id="WP_011026744.1">
    <property type="nucleotide sequence ID" value="NZ_JANUCV010000001.1"/>
</dbReference>
<dbReference type="SMR" id="Q8R6M7"/>
<dbReference type="STRING" id="273068.TTE2775"/>
<dbReference type="KEGG" id="tte:TTE2775"/>
<dbReference type="eggNOG" id="COG0359">
    <property type="taxonomic scope" value="Bacteria"/>
</dbReference>
<dbReference type="HOGENOM" id="CLU_078938_3_0_9"/>
<dbReference type="OrthoDB" id="9788336at2"/>
<dbReference type="Proteomes" id="UP000000555">
    <property type="component" value="Chromosome"/>
</dbReference>
<dbReference type="GO" id="GO:1990904">
    <property type="term" value="C:ribonucleoprotein complex"/>
    <property type="evidence" value="ECO:0007669"/>
    <property type="project" value="UniProtKB-KW"/>
</dbReference>
<dbReference type="GO" id="GO:0005840">
    <property type="term" value="C:ribosome"/>
    <property type="evidence" value="ECO:0007669"/>
    <property type="project" value="UniProtKB-KW"/>
</dbReference>
<dbReference type="GO" id="GO:0019843">
    <property type="term" value="F:rRNA binding"/>
    <property type="evidence" value="ECO:0007669"/>
    <property type="project" value="UniProtKB-UniRule"/>
</dbReference>
<dbReference type="GO" id="GO:0003735">
    <property type="term" value="F:structural constituent of ribosome"/>
    <property type="evidence" value="ECO:0007669"/>
    <property type="project" value="InterPro"/>
</dbReference>
<dbReference type="GO" id="GO:0006412">
    <property type="term" value="P:translation"/>
    <property type="evidence" value="ECO:0007669"/>
    <property type="project" value="UniProtKB-UniRule"/>
</dbReference>
<dbReference type="FunFam" id="3.40.5.10:FF:000002">
    <property type="entry name" value="50S ribosomal protein L9"/>
    <property type="match status" value="1"/>
</dbReference>
<dbReference type="Gene3D" id="3.10.430.100">
    <property type="entry name" value="Ribosomal protein L9, C-terminal domain"/>
    <property type="match status" value="1"/>
</dbReference>
<dbReference type="Gene3D" id="3.40.5.10">
    <property type="entry name" value="Ribosomal protein L9, N-terminal domain"/>
    <property type="match status" value="1"/>
</dbReference>
<dbReference type="HAMAP" id="MF_00503">
    <property type="entry name" value="Ribosomal_bL9"/>
    <property type="match status" value="1"/>
</dbReference>
<dbReference type="InterPro" id="IPR000244">
    <property type="entry name" value="Ribosomal_bL9"/>
</dbReference>
<dbReference type="InterPro" id="IPR009027">
    <property type="entry name" value="Ribosomal_bL9/RNase_H1_N"/>
</dbReference>
<dbReference type="InterPro" id="IPR020594">
    <property type="entry name" value="Ribosomal_bL9_bac/chp"/>
</dbReference>
<dbReference type="InterPro" id="IPR020069">
    <property type="entry name" value="Ribosomal_bL9_C"/>
</dbReference>
<dbReference type="InterPro" id="IPR036791">
    <property type="entry name" value="Ribosomal_bL9_C_sf"/>
</dbReference>
<dbReference type="InterPro" id="IPR020070">
    <property type="entry name" value="Ribosomal_bL9_N"/>
</dbReference>
<dbReference type="InterPro" id="IPR036935">
    <property type="entry name" value="Ribosomal_bL9_N_sf"/>
</dbReference>
<dbReference type="NCBIfam" id="TIGR00158">
    <property type="entry name" value="L9"/>
    <property type="match status" value="1"/>
</dbReference>
<dbReference type="PANTHER" id="PTHR21368">
    <property type="entry name" value="50S RIBOSOMAL PROTEIN L9"/>
    <property type="match status" value="1"/>
</dbReference>
<dbReference type="Pfam" id="PF03948">
    <property type="entry name" value="Ribosomal_L9_C"/>
    <property type="match status" value="1"/>
</dbReference>
<dbReference type="Pfam" id="PF01281">
    <property type="entry name" value="Ribosomal_L9_N"/>
    <property type="match status" value="1"/>
</dbReference>
<dbReference type="SUPFAM" id="SSF55658">
    <property type="entry name" value="L9 N-domain-like"/>
    <property type="match status" value="1"/>
</dbReference>
<dbReference type="SUPFAM" id="SSF55653">
    <property type="entry name" value="Ribosomal protein L9 C-domain"/>
    <property type="match status" value="1"/>
</dbReference>
<dbReference type="PROSITE" id="PS00651">
    <property type="entry name" value="RIBOSOMAL_L9"/>
    <property type="match status" value="1"/>
</dbReference>
<gene>
    <name evidence="1" type="primary">rplI</name>
    <name type="ordered locus">TTE2775</name>
</gene>
<comment type="function">
    <text evidence="1">Binds to the 23S rRNA.</text>
</comment>
<comment type="similarity">
    <text evidence="1">Belongs to the bacterial ribosomal protein bL9 family.</text>
</comment>
<organism>
    <name type="scientific">Caldanaerobacter subterraneus subsp. tengcongensis (strain DSM 15242 / JCM 11007 / NBRC 100824 / MB4)</name>
    <name type="common">Thermoanaerobacter tengcongensis</name>
    <dbReference type="NCBI Taxonomy" id="273068"/>
    <lineage>
        <taxon>Bacteria</taxon>
        <taxon>Bacillati</taxon>
        <taxon>Bacillota</taxon>
        <taxon>Clostridia</taxon>
        <taxon>Thermoanaerobacterales</taxon>
        <taxon>Thermoanaerobacteraceae</taxon>
        <taxon>Caldanaerobacter</taxon>
    </lineage>
</organism>
<accession>Q8R6M7</accession>
<evidence type="ECO:0000255" key="1">
    <source>
        <dbReference type="HAMAP-Rule" id="MF_00503"/>
    </source>
</evidence>
<evidence type="ECO:0000305" key="2"/>